<feature type="chain" id="PRO_0000429172" description="Prolyl 3,4-dihydroxylase OGFOD1">
    <location>
        <begin position="1"/>
        <end position="514"/>
    </location>
</feature>
<feature type="domain" description="Fe2OG dioxygenase" evidence="2">
    <location>
        <begin position="114"/>
        <end position="221"/>
    </location>
</feature>
<feature type="binding site" evidence="1 2">
    <location>
        <position position="132"/>
    </location>
    <ligand>
        <name>Fe cation</name>
        <dbReference type="ChEBI" id="CHEBI:24875"/>
    </ligand>
</feature>
<feature type="binding site" evidence="2">
    <location>
        <position position="134"/>
    </location>
    <ligand>
        <name>Fe cation</name>
        <dbReference type="ChEBI" id="CHEBI:24875"/>
    </ligand>
</feature>
<feature type="binding site" evidence="1">
    <location>
        <position position="146"/>
    </location>
    <ligand>
        <name>2-oxoglutarate</name>
        <dbReference type="ChEBI" id="CHEBI:16810"/>
    </ligand>
</feature>
<feature type="binding site" evidence="1 2">
    <location>
        <position position="200"/>
    </location>
    <ligand>
        <name>Fe cation</name>
        <dbReference type="ChEBI" id="CHEBI:24875"/>
    </ligand>
</feature>
<feature type="binding site" evidence="2">
    <location>
        <position position="212"/>
    </location>
    <ligand>
        <name>2-oxoglutarate</name>
        <dbReference type="ChEBI" id="CHEBI:16810"/>
    </ligand>
</feature>
<gene>
    <name type="primary">Ogd</name>
    <name type="ordered locus">Ot02g01720</name>
</gene>
<comment type="function">
    <text evidence="3">Prolyl 3,4-dihydroxylase that catalyzes 3,4-dihydroxylation of 'Pro-61' of small ribosomal subunit uS12 (RPS23), thereby regulating protein translation termination efficiency.</text>
</comment>
<comment type="catalytic activity">
    <reaction evidence="3">
        <text>[ribosomal protein uS12]-L-proline + 2-oxoglutarate + O2 = [ribosomal protein uS12]-(3S)-3-hydroxy-L-proline + succinate + CO2</text>
        <dbReference type="Rhea" id="RHEA:54156"/>
        <dbReference type="Rhea" id="RHEA-COMP:13816"/>
        <dbReference type="Rhea" id="RHEA-COMP:13818"/>
        <dbReference type="ChEBI" id="CHEBI:15379"/>
        <dbReference type="ChEBI" id="CHEBI:16526"/>
        <dbReference type="ChEBI" id="CHEBI:16810"/>
        <dbReference type="ChEBI" id="CHEBI:30031"/>
        <dbReference type="ChEBI" id="CHEBI:50342"/>
        <dbReference type="ChEBI" id="CHEBI:85428"/>
    </reaction>
</comment>
<comment type="catalytic activity">
    <reaction evidence="3">
        <text>[ribosomal protein uS12]-(3S)-3-hydroxy-L-proline + 2-oxoglutarate + O2 = [ribosomal protein uS12]-(3S)-3,4-dihydroxy-L-proline + succinate + CO2</text>
        <dbReference type="Rhea" id="RHEA:54160"/>
        <dbReference type="Rhea" id="RHEA-COMP:13817"/>
        <dbReference type="Rhea" id="RHEA-COMP:13818"/>
        <dbReference type="ChEBI" id="CHEBI:15379"/>
        <dbReference type="ChEBI" id="CHEBI:16526"/>
        <dbReference type="ChEBI" id="CHEBI:16810"/>
        <dbReference type="ChEBI" id="CHEBI:30031"/>
        <dbReference type="ChEBI" id="CHEBI:85428"/>
        <dbReference type="ChEBI" id="CHEBI:138052"/>
    </reaction>
</comment>
<comment type="cofactor">
    <cofactor evidence="2">
        <name>Fe(2+)</name>
        <dbReference type="ChEBI" id="CHEBI:29033"/>
    </cofactor>
    <text evidence="2">Binds 1 Fe(2+) ion per subunit.</text>
</comment>
<comment type="cofactor">
    <cofactor evidence="4">
        <name>L-ascorbate</name>
        <dbReference type="ChEBI" id="CHEBI:38290"/>
    </cofactor>
</comment>
<comment type="subunit">
    <text evidence="1">Monomer and homodimer.</text>
</comment>
<comment type="similarity">
    <text evidence="4">Belongs to the TPA1 family.</text>
</comment>
<sequence length="514" mass="58416">MPDHIYSHSFAQFLRNADNSVVNINPYPYVAFEDVFDDTFLRECLKELKSYLTAHFKETDLFKVFQTTDLANLEDCIRDAHTNVPNLIRLREHLYSPGFRGFVSTVTGTGPLDGAVDCSCNIYTSGCHLLCHDDVIGTRKISYIIYLSDPDCDWLAVDGGQLELYASDRRTVPTHTPVVSILPSWNSMVMFEVSPGRSFHAVREVSAEMKTRVSISGWFHTKERHIKRNQRETSTLDQLHSMIPATHAEWAVLHVNRVLSPSYSLVQDLTKWINPEYLRSESVKRVRQVFEADGSVQLFNFLLPHIAEPIKRKLNREDCRNSRHRCMYDHGYGDSWVVQGPPHVQRYLSYQPLECTLANKRSNSGELLKKLMCDLFESSSFQNWVRAVTGSVCDLAHSEVRRFRPGFDYTLAHAGTKRCSSEIDVTLCLTSGPNPAEWLSGDLGGFKCFIPIGSKSDRADVYEEIGEEQNMRSVTPSFNCLSLVKVNTGIGDFVKYVSTSAKSSRWDIVCRYST</sequence>
<proteinExistence type="evidence at protein level"/>
<reference key="1">
    <citation type="journal article" date="2006" name="Proc. Natl. Acad. Sci. U.S.A.">
        <title>Genome analysis of the smallest free-living eukaryote Ostreococcus tauri unveils many unique features.</title>
        <authorList>
            <person name="Derelle E."/>
            <person name="Ferraz C."/>
            <person name="Rombauts S."/>
            <person name="Rouze P."/>
            <person name="Worden A.Z."/>
            <person name="Robbens S."/>
            <person name="Partensky F."/>
            <person name="Degroeve S."/>
            <person name="Echeynie S."/>
            <person name="Cooke R."/>
            <person name="Saeys Y."/>
            <person name="Wuyts J."/>
            <person name="Jabbari K."/>
            <person name="Bowler C."/>
            <person name="Panaud O."/>
            <person name="Piegu B."/>
            <person name="Ball S.G."/>
            <person name="Ral J.-P."/>
            <person name="Bouget F.-Y."/>
            <person name="Piganeau G."/>
            <person name="De Baets B."/>
            <person name="Picard A."/>
            <person name="Delseny M."/>
            <person name="Demaille J."/>
            <person name="Van de Peer Y."/>
            <person name="Moreau H."/>
        </authorList>
    </citation>
    <scope>NUCLEOTIDE SEQUENCE [LARGE SCALE GENOMIC DNA]</scope>
    <source>
        <strain>OTTH0595</strain>
    </source>
</reference>
<reference key="2">
    <citation type="journal article" date="2014" name="Proc. Natl. Acad. Sci. U.S.A.">
        <title>Hydroxylation of the eukaryotic ribosomal decoding center affects translational accuracy.</title>
        <authorList>
            <person name="Loenarz C."/>
            <person name="Sekirnik R."/>
            <person name="Thalhammer A."/>
            <person name="Ge W."/>
            <person name="Spivakovsky E."/>
            <person name="Mackeen M.M."/>
            <person name="McDonough M.A."/>
            <person name="Cockman M.E."/>
            <person name="Kessler B.M."/>
            <person name="Ratcliffe P.J."/>
            <person name="Wolf A."/>
            <person name="Schofield C.J."/>
        </authorList>
    </citation>
    <scope>FUNCTION</scope>
    <scope>CATALYTIC ACTIVITY</scope>
</reference>
<evidence type="ECO:0000250" key="1">
    <source>
        <dbReference type="UniProtKB" id="P40032"/>
    </source>
</evidence>
<evidence type="ECO:0000255" key="2">
    <source>
        <dbReference type="PROSITE-ProRule" id="PRU00805"/>
    </source>
</evidence>
<evidence type="ECO:0000269" key="3">
    <source>
    </source>
</evidence>
<evidence type="ECO:0000305" key="4"/>
<accession>Q01F03</accession>
<dbReference type="EC" id="1.14.11.-" evidence="3"/>
<dbReference type="EMBL" id="CAID01000002">
    <property type="protein sequence ID" value="CAL52098.1"/>
    <property type="molecule type" value="Genomic_DNA"/>
</dbReference>
<dbReference type="RefSeq" id="XP_003074838.1">
    <property type="nucleotide sequence ID" value="XM_003074790.1"/>
</dbReference>
<dbReference type="SMR" id="Q01F03"/>
<dbReference type="STRING" id="70448.Q01F03"/>
<dbReference type="GeneID" id="9832551"/>
<dbReference type="KEGG" id="ota:OT_ostta02g00870"/>
<dbReference type="eggNOG" id="KOG3844">
    <property type="taxonomic scope" value="Eukaryota"/>
</dbReference>
<dbReference type="InParanoid" id="Q01F03"/>
<dbReference type="OMA" id="GWYHIPQ"/>
<dbReference type="OrthoDB" id="430522at2759"/>
<dbReference type="Proteomes" id="UP000009170">
    <property type="component" value="Chromosome 2"/>
</dbReference>
<dbReference type="GO" id="GO:0005506">
    <property type="term" value="F:iron ion binding"/>
    <property type="evidence" value="ECO:0007669"/>
    <property type="project" value="InterPro"/>
</dbReference>
<dbReference type="GO" id="GO:0031418">
    <property type="term" value="F:L-ascorbic acid binding"/>
    <property type="evidence" value="ECO:0007669"/>
    <property type="project" value="UniProtKB-KW"/>
</dbReference>
<dbReference type="GO" id="GO:0031543">
    <property type="term" value="F:peptidyl-proline dioxygenase activity"/>
    <property type="evidence" value="ECO:0000314"/>
    <property type="project" value="UniProtKB"/>
</dbReference>
<dbReference type="GO" id="GO:0018188">
    <property type="term" value="P:peptidyl-proline di-hydroxylation"/>
    <property type="evidence" value="ECO:0000314"/>
    <property type="project" value="UniProtKB"/>
</dbReference>
<dbReference type="Gene3D" id="3.60.130.20">
    <property type="entry name" value="Oxoglutarate/iron-dependent oxygenase, C-terminal degradation domain"/>
    <property type="match status" value="1"/>
</dbReference>
<dbReference type="Gene3D" id="2.60.120.620">
    <property type="entry name" value="q2cbj1_9rhob like domain"/>
    <property type="match status" value="1"/>
</dbReference>
<dbReference type="InterPro" id="IPR005123">
    <property type="entry name" value="Oxoglu/Fe-dep_dioxygenase_dom"/>
</dbReference>
<dbReference type="InterPro" id="IPR019601">
    <property type="entry name" value="Oxoglutarate/Fe-dep_Oase_C"/>
</dbReference>
<dbReference type="InterPro" id="IPR006620">
    <property type="entry name" value="Pro_4_hyd_alph"/>
</dbReference>
<dbReference type="InterPro" id="IPR043044">
    <property type="entry name" value="TPA1/Ofd1_C"/>
</dbReference>
<dbReference type="InterPro" id="IPR039558">
    <property type="entry name" value="TPA1/OFD1_N"/>
</dbReference>
<dbReference type="InterPro" id="IPR051842">
    <property type="entry name" value="uS12_prolyl_hydroxylase"/>
</dbReference>
<dbReference type="PANTHER" id="PTHR12117">
    <property type="entry name" value="HISTONE ACETYLTRANSFERASE COMPLEX"/>
    <property type="match status" value="1"/>
</dbReference>
<dbReference type="PANTHER" id="PTHR12117:SF0">
    <property type="entry name" value="PROLYL 3-HYDROXYLASE OGFOD1"/>
    <property type="match status" value="1"/>
</dbReference>
<dbReference type="Pfam" id="PF13661">
    <property type="entry name" value="2OG-FeII_Oxy_4"/>
    <property type="match status" value="1"/>
</dbReference>
<dbReference type="Pfam" id="PF10637">
    <property type="entry name" value="Ofd1_CTDD"/>
    <property type="match status" value="1"/>
</dbReference>
<dbReference type="SMART" id="SM00702">
    <property type="entry name" value="P4Hc"/>
    <property type="match status" value="1"/>
</dbReference>
<dbReference type="PROSITE" id="PS51471">
    <property type="entry name" value="FE2OG_OXY"/>
    <property type="match status" value="1"/>
</dbReference>
<keyword id="KW-0223">Dioxygenase</keyword>
<keyword id="KW-0408">Iron</keyword>
<keyword id="KW-0479">Metal-binding</keyword>
<keyword id="KW-0560">Oxidoreductase</keyword>
<keyword id="KW-1185">Reference proteome</keyword>
<keyword id="KW-0847">Vitamin C</keyword>
<organism>
    <name type="scientific">Ostreococcus tauri</name>
    <dbReference type="NCBI Taxonomy" id="70448"/>
    <lineage>
        <taxon>Eukaryota</taxon>
        <taxon>Viridiplantae</taxon>
        <taxon>Chlorophyta</taxon>
        <taxon>Mamiellophyceae</taxon>
        <taxon>Mamiellales</taxon>
        <taxon>Bathycoccaceae</taxon>
        <taxon>Ostreococcus</taxon>
    </lineage>
</organism>
<name>OGFD1_OSTTA</name>
<protein>
    <recommendedName>
        <fullName>Prolyl 3,4-dihydroxylase OGFOD1</fullName>
        <shortName>otOGFOD1</shortName>
        <ecNumber evidence="3">1.14.11.-</ecNumber>
    </recommendedName>
    <alternativeName>
        <fullName>uS12 prolyl 3,4-dihydroxylase</fullName>
    </alternativeName>
</protein>